<name>ATPO_IPOBA</name>
<dbReference type="EMBL" id="J05397">
    <property type="protein sequence ID" value="AAA33388.1"/>
    <property type="molecule type" value="mRNA"/>
</dbReference>
<dbReference type="PIR" id="A35227">
    <property type="entry name" value="A35227"/>
</dbReference>
<dbReference type="SMR" id="P22778"/>
<dbReference type="GO" id="GO:0005743">
    <property type="term" value="C:mitochondrial inner membrane"/>
    <property type="evidence" value="ECO:0007669"/>
    <property type="project" value="UniProtKB-SubCell"/>
</dbReference>
<dbReference type="GO" id="GO:0046933">
    <property type="term" value="F:proton-transporting ATP synthase activity, rotational mechanism"/>
    <property type="evidence" value="ECO:0007669"/>
    <property type="project" value="InterPro"/>
</dbReference>
<dbReference type="Gene3D" id="1.10.520.20">
    <property type="entry name" value="N-terminal domain of the delta subunit of the F1F0-ATP synthase"/>
    <property type="match status" value="1"/>
</dbReference>
<dbReference type="HAMAP" id="MF_01416">
    <property type="entry name" value="ATP_synth_delta_bact"/>
    <property type="match status" value="1"/>
</dbReference>
<dbReference type="InterPro" id="IPR026015">
    <property type="entry name" value="ATP_synth_OSCP/delta_N_sf"/>
</dbReference>
<dbReference type="InterPro" id="IPR020781">
    <property type="entry name" value="ATPase_OSCP/d_CS"/>
</dbReference>
<dbReference type="InterPro" id="IPR000711">
    <property type="entry name" value="ATPase_OSCP/dsu"/>
</dbReference>
<dbReference type="NCBIfam" id="TIGR01145">
    <property type="entry name" value="ATP_synt_delta"/>
    <property type="match status" value="1"/>
</dbReference>
<dbReference type="PANTHER" id="PTHR11910">
    <property type="entry name" value="ATP SYNTHASE DELTA CHAIN"/>
    <property type="match status" value="1"/>
</dbReference>
<dbReference type="Pfam" id="PF00213">
    <property type="entry name" value="OSCP"/>
    <property type="match status" value="1"/>
</dbReference>
<dbReference type="PRINTS" id="PR00125">
    <property type="entry name" value="ATPASEDELTA"/>
</dbReference>
<dbReference type="SUPFAM" id="SSF47928">
    <property type="entry name" value="N-terminal domain of the delta subunit of the F1F0-ATP synthase"/>
    <property type="match status" value="1"/>
</dbReference>
<dbReference type="PROSITE" id="PS00389">
    <property type="entry name" value="ATPASE_DELTA"/>
    <property type="match status" value="1"/>
</dbReference>
<protein>
    <recommendedName>
        <fullName>ATP synthase subunit O, mitochondrial</fullName>
    </recommendedName>
    <alternativeName>
        <fullName>Oligomycin sensitivity conferral protein</fullName>
        <shortName>OSCP</shortName>
    </alternativeName>
</protein>
<keyword id="KW-0066">ATP synthesis</keyword>
<keyword id="KW-0903">Direct protein sequencing</keyword>
<keyword id="KW-0375">Hydrogen ion transport</keyword>
<keyword id="KW-0406">Ion transport</keyword>
<keyword id="KW-0472">Membrane</keyword>
<keyword id="KW-0496">Mitochondrion</keyword>
<keyword id="KW-0999">Mitochondrion inner membrane</keyword>
<keyword id="KW-0809">Transit peptide</keyword>
<keyword id="KW-0813">Transport</keyword>
<feature type="transit peptide" description="Mitochondrion" evidence="1">
    <location>
        <begin position="1"/>
        <end position="45"/>
    </location>
</feature>
<feature type="chain" id="PRO_0000002644" description="ATP synthase subunit O, mitochondrial">
    <location>
        <begin position="46"/>
        <end position="244"/>
    </location>
</feature>
<feature type="sequence variant">
    <original>T</original>
    <variation>A</variation>
    <location>
        <position position="4"/>
    </location>
</feature>
<proteinExistence type="evidence at protein level"/>
<comment type="function">
    <text>Mitochondrial membrane ATP synthase (F(1)F(0) ATP synthase or Complex V) produces ATP from ADP in the presence of a proton gradient across the membrane which is generated by electron transport complexes of the respiratory chain. F-type ATPases consist of two structural domains, F(1) - containing the extramembraneous catalytic core and F(0) - containing the membrane proton channel, linked together by a central stalk and a peripheral stalk. During catalysis, ATP synthesis in the catalytic domain of F(1) is coupled via a rotary mechanism of the central stalk subunits to proton translocation. Part of the complex F(0) domain and the peripheric stalk, which acts as a stator to hold the catalytic alpha(3)beta(3) subcomplex and subunit a/ATP6 static relative to the rotary elements.</text>
</comment>
<comment type="subunit">
    <text>F-type ATPases have 2 components, CF(1) - the catalytic core - and CF(0) - the membrane proton channel. CF(1) has five subunits: alpha(3), beta(3), gamma(1), delta(1), epsilon(1). CF(0) has three main subunits: a, b and c.</text>
</comment>
<comment type="subcellular location">
    <subcellularLocation>
        <location>Mitochondrion</location>
    </subcellularLocation>
    <subcellularLocation>
        <location>Mitochondrion inner membrane</location>
    </subcellularLocation>
</comment>
<comment type="similarity">
    <text evidence="2">Belongs to the ATPase delta chain family.</text>
</comment>
<reference key="1">
    <citation type="journal article" date="1990" name="J. Biol. Chem.">
        <title>Primary structure of a precursor for the delta-subunit of sweet potato mitochondrial F1-ATPase deduced from full length cDNA.</title>
        <authorList>
            <person name="Kimura T."/>
            <person name="Takeda S."/>
            <person name="Asahi T."/>
            <person name="Nakamura K."/>
        </authorList>
    </citation>
    <scope>NUCLEOTIDE SEQUENCE [MRNA]</scope>
    <source>
        <strain>cv. Kokei No. 14</strain>
        <tissue>Tuberous root</tissue>
    </source>
</reference>
<reference key="2">
    <citation type="journal article" date="1989" name="J. Biol. Chem.">
        <title>Correspondence of minor subunits of plant mitochondrial F1ATPase to F1F0ATPase subunits of other organisms.</title>
        <authorList>
            <person name="Kimura T."/>
            <person name="Nakamura K."/>
            <person name="Kajiura H."/>
            <person name="Hattori H."/>
            <person name="Nelson N."/>
            <person name="Asahi T."/>
        </authorList>
    </citation>
    <scope>PROTEIN SEQUENCE OF 46-78</scope>
    <source>
        <strain>cv. Kokei No. 14</strain>
        <tissue>Tuberous root</tissue>
    </source>
</reference>
<sequence>MAMTGRARSMGFSILQKALSSAQRSNAHRSILCPTLSNSELLRNYATASASKEQKIKVPLTMYGVSGNYASALYLAAVKSNTLEKVESELYDLVEASKKSPTFSQFMRDPSVPVDTRVNAIKEICAQAKFGDTTQNFLLILAENGRLKHIDRIVKRFKELTMAHRGEVKATVTTVIPLPADEEKELKATLQEMVGQGKSVQIEQKIDPTILGGLVVEFGQKVFDMSIRTRARQMERFLREPLNF</sequence>
<accession>P22778</accession>
<evidence type="ECO:0000269" key="1">
    <source>
    </source>
</evidence>
<evidence type="ECO:0000305" key="2"/>
<organism>
    <name type="scientific">Ipomoea batatas</name>
    <name type="common">Sweet potato</name>
    <name type="synonym">Convolvulus batatas</name>
    <dbReference type="NCBI Taxonomy" id="4120"/>
    <lineage>
        <taxon>Eukaryota</taxon>
        <taxon>Viridiplantae</taxon>
        <taxon>Streptophyta</taxon>
        <taxon>Embryophyta</taxon>
        <taxon>Tracheophyta</taxon>
        <taxon>Spermatophyta</taxon>
        <taxon>Magnoliopsida</taxon>
        <taxon>eudicotyledons</taxon>
        <taxon>Gunneridae</taxon>
        <taxon>Pentapetalae</taxon>
        <taxon>asterids</taxon>
        <taxon>lamiids</taxon>
        <taxon>Solanales</taxon>
        <taxon>Convolvulaceae</taxon>
        <taxon>Ipomoeeae</taxon>
        <taxon>Ipomoea</taxon>
    </lineage>
</organism>